<sequence>MSNSLASDTPRLPSIDTLLRHPACLPLIDRHGRDAVLNTLRQLLDDLREPARNGELGSAELAPEILLGRSGERLALQQRSQVRRVFNLTGTVLHTNLGRALLPDEAIEAMQTAARYPLNLEFDLATGKRGDRDDLIEGLIRELTGAEAVTVVNNNAAAVLLALNSLGARKEGIISRGELIEIGGAFRIPDIMARAGVKLHEVGTTNRTHARDYEAAIGPRTGLLMRVHCSNYSIQGFTTQVPTAELARIAHQHELPLLEDLGSGSLLDLTRWGLPAEPTVRQALADGADIVTFSGDKLLGGPQAGIIVGHKDLITRIKKNPLKRALRVDKITLAALEAVLALYRNPDRLAERLPSLRLLTRSQAEIQAQAERLAPELQARLGEQWAISVEPALGMIGSGSQPVARLPSAALCLRPQVSKKLRGRSLHVLERALRDLPVPVLGRIDDDALWLDLRQLDDEAQWLAQLPALQLGPVQ</sequence>
<accession>Q88QJ8</accession>
<proteinExistence type="inferred from homology"/>
<reference key="1">
    <citation type="journal article" date="2002" name="Environ. Microbiol.">
        <title>Complete genome sequence and comparative analysis of the metabolically versatile Pseudomonas putida KT2440.</title>
        <authorList>
            <person name="Nelson K.E."/>
            <person name="Weinel C."/>
            <person name="Paulsen I.T."/>
            <person name="Dodson R.J."/>
            <person name="Hilbert H."/>
            <person name="Martins dos Santos V.A.P."/>
            <person name="Fouts D.E."/>
            <person name="Gill S.R."/>
            <person name="Pop M."/>
            <person name="Holmes M."/>
            <person name="Brinkac L.M."/>
            <person name="Beanan M.J."/>
            <person name="DeBoy R.T."/>
            <person name="Daugherty S.C."/>
            <person name="Kolonay J.F."/>
            <person name="Madupu R."/>
            <person name="Nelson W.C."/>
            <person name="White O."/>
            <person name="Peterson J.D."/>
            <person name="Khouri H.M."/>
            <person name="Hance I."/>
            <person name="Chris Lee P."/>
            <person name="Holtzapple E.K."/>
            <person name="Scanlan D."/>
            <person name="Tran K."/>
            <person name="Moazzez A."/>
            <person name="Utterback T.R."/>
            <person name="Rizzo M."/>
            <person name="Lee K."/>
            <person name="Kosack D."/>
            <person name="Moestl D."/>
            <person name="Wedler H."/>
            <person name="Lauber J."/>
            <person name="Stjepandic D."/>
            <person name="Hoheisel J."/>
            <person name="Straetz M."/>
            <person name="Heim S."/>
            <person name="Kiewitz C."/>
            <person name="Eisen J.A."/>
            <person name="Timmis K.N."/>
            <person name="Duesterhoeft A."/>
            <person name="Tuemmler B."/>
            <person name="Fraser C.M."/>
        </authorList>
    </citation>
    <scope>NUCLEOTIDE SEQUENCE [LARGE SCALE GENOMIC DNA]</scope>
    <source>
        <strain>ATCC 47054 / DSM 6125 / CFBP 8728 / NCIMB 11950 / KT2440</strain>
    </source>
</reference>
<evidence type="ECO:0000255" key="1">
    <source>
        <dbReference type="HAMAP-Rule" id="MF_00423"/>
    </source>
</evidence>
<organism>
    <name type="scientific">Pseudomonas putida (strain ATCC 47054 / DSM 6125 / CFBP 8728 / NCIMB 11950 / KT2440)</name>
    <dbReference type="NCBI Taxonomy" id="160488"/>
    <lineage>
        <taxon>Bacteria</taxon>
        <taxon>Pseudomonadati</taxon>
        <taxon>Pseudomonadota</taxon>
        <taxon>Gammaproteobacteria</taxon>
        <taxon>Pseudomonadales</taxon>
        <taxon>Pseudomonadaceae</taxon>
        <taxon>Pseudomonas</taxon>
    </lineage>
</organism>
<dbReference type="EC" id="2.9.1.1" evidence="1"/>
<dbReference type="EMBL" id="AE015451">
    <property type="protein sequence ID" value="AAN66122.1"/>
    <property type="molecule type" value="Genomic_DNA"/>
</dbReference>
<dbReference type="RefSeq" id="NP_742658.1">
    <property type="nucleotide sequence ID" value="NC_002947.4"/>
</dbReference>
<dbReference type="RefSeq" id="WP_010951785.1">
    <property type="nucleotide sequence ID" value="NZ_CP169744.1"/>
</dbReference>
<dbReference type="SMR" id="Q88QJ8"/>
<dbReference type="STRING" id="160488.PP_0493"/>
<dbReference type="PaxDb" id="160488-PP_0493"/>
<dbReference type="GeneID" id="83677791"/>
<dbReference type="KEGG" id="ppu:PP_0493"/>
<dbReference type="PATRIC" id="fig|160488.4.peg.525"/>
<dbReference type="eggNOG" id="COG1921">
    <property type="taxonomic scope" value="Bacteria"/>
</dbReference>
<dbReference type="HOGENOM" id="CLU_038142_1_0_6"/>
<dbReference type="OrthoDB" id="9787096at2"/>
<dbReference type="PhylomeDB" id="Q88QJ8"/>
<dbReference type="BioCyc" id="PPUT160488:G1G01-541-MONOMER"/>
<dbReference type="UniPathway" id="UPA00906">
    <property type="reaction ID" value="UER00896"/>
</dbReference>
<dbReference type="Proteomes" id="UP000000556">
    <property type="component" value="Chromosome"/>
</dbReference>
<dbReference type="GO" id="GO:0005737">
    <property type="term" value="C:cytoplasm"/>
    <property type="evidence" value="ECO:0007669"/>
    <property type="project" value="UniProtKB-SubCell"/>
</dbReference>
<dbReference type="GO" id="GO:0004125">
    <property type="term" value="F:L-seryl-tRNA(Sec) selenium transferase activity"/>
    <property type="evidence" value="ECO:0007669"/>
    <property type="project" value="UniProtKB-UniRule"/>
</dbReference>
<dbReference type="GO" id="GO:0001717">
    <property type="term" value="P:conversion of seryl-tRNAsec to selenocys-tRNAsec"/>
    <property type="evidence" value="ECO:0007669"/>
    <property type="project" value="UniProtKB-UniRule"/>
</dbReference>
<dbReference type="GO" id="GO:0001514">
    <property type="term" value="P:selenocysteine incorporation"/>
    <property type="evidence" value="ECO:0007669"/>
    <property type="project" value="UniProtKB-UniRule"/>
</dbReference>
<dbReference type="FunFam" id="3.40.640.10:FF:000028">
    <property type="entry name" value="L-seryl-tRNA(Sec) selenium transferase"/>
    <property type="match status" value="1"/>
</dbReference>
<dbReference type="Gene3D" id="3.90.1150.180">
    <property type="match status" value="1"/>
</dbReference>
<dbReference type="Gene3D" id="3.40.640.10">
    <property type="entry name" value="Type I PLP-dependent aspartate aminotransferase-like (Major domain)"/>
    <property type="match status" value="1"/>
</dbReference>
<dbReference type="HAMAP" id="MF_00423">
    <property type="entry name" value="SelA"/>
    <property type="match status" value="1"/>
</dbReference>
<dbReference type="InterPro" id="IPR015424">
    <property type="entry name" value="PyrdxlP-dep_Trfase"/>
</dbReference>
<dbReference type="InterPro" id="IPR015421">
    <property type="entry name" value="PyrdxlP-dep_Trfase_major"/>
</dbReference>
<dbReference type="InterPro" id="IPR018319">
    <property type="entry name" value="SelA-like"/>
</dbReference>
<dbReference type="InterPro" id="IPR004534">
    <property type="entry name" value="SelA_trans"/>
</dbReference>
<dbReference type="InterPro" id="IPR025862">
    <property type="entry name" value="SelA_trans_N_dom"/>
</dbReference>
<dbReference type="NCBIfam" id="TIGR00474">
    <property type="entry name" value="selA"/>
    <property type="match status" value="1"/>
</dbReference>
<dbReference type="PANTHER" id="PTHR32328">
    <property type="entry name" value="L-SERYL-TRNA(SEC) SELENIUM TRANSFERASE"/>
    <property type="match status" value="1"/>
</dbReference>
<dbReference type="PANTHER" id="PTHR32328:SF0">
    <property type="entry name" value="L-SERYL-TRNA(SEC) SELENIUM TRANSFERASE"/>
    <property type="match status" value="1"/>
</dbReference>
<dbReference type="Pfam" id="PF12390">
    <property type="entry name" value="Se-cys_synth_N"/>
    <property type="match status" value="1"/>
</dbReference>
<dbReference type="Pfam" id="PF03841">
    <property type="entry name" value="SelA"/>
    <property type="match status" value="1"/>
</dbReference>
<dbReference type="SUPFAM" id="SSF53383">
    <property type="entry name" value="PLP-dependent transferases"/>
    <property type="match status" value="1"/>
</dbReference>
<keyword id="KW-0963">Cytoplasm</keyword>
<keyword id="KW-0648">Protein biosynthesis</keyword>
<keyword id="KW-0663">Pyridoxal phosphate</keyword>
<keyword id="KW-1185">Reference proteome</keyword>
<keyword id="KW-0711">Selenium</keyword>
<keyword id="KW-0808">Transferase</keyword>
<name>SELA_PSEPK</name>
<protein>
    <recommendedName>
        <fullName evidence="1">L-seryl-tRNA(Sec) selenium transferase</fullName>
        <ecNumber evidence="1">2.9.1.1</ecNumber>
    </recommendedName>
    <alternativeName>
        <fullName evidence="1">Selenocysteine synthase</fullName>
        <shortName evidence="1">Sec synthase</shortName>
    </alternativeName>
    <alternativeName>
        <fullName evidence="1">Selenocysteinyl-tRNA(Sec) synthase</fullName>
    </alternativeName>
</protein>
<comment type="function">
    <text evidence="1">Converts seryl-tRNA(Sec) to selenocysteinyl-tRNA(Sec) required for selenoprotein biosynthesis.</text>
</comment>
<comment type="catalytic activity">
    <reaction evidence="1">
        <text>L-seryl-tRNA(Sec) + selenophosphate + H(+) = L-selenocysteinyl-tRNA(Sec) + phosphate</text>
        <dbReference type="Rhea" id="RHEA:22728"/>
        <dbReference type="Rhea" id="RHEA-COMP:9742"/>
        <dbReference type="Rhea" id="RHEA-COMP:9743"/>
        <dbReference type="ChEBI" id="CHEBI:15378"/>
        <dbReference type="ChEBI" id="CHEBI:16144"/>
        <dbReference type="ChEBI" id="CHEBI:43474"/>
        <dbReference type="ChEBI" id="CHEBI:78533"/>
        <dbReference type="ChEBI" id="CHEBI:78573"/>
        <dbReference type="EC" id="2.9.1.1"/>
    </reaction>
</comment>
<comment type="cofactor">
    <cofactor evidence="1">
        <name>pyridoxal 5'-phosphate</name>
        <dbReference type="ChEBI" id="CHEBI:597326"/>
    </cofactor>
</comment>
<comment type="pathway">
    <text evidence="1">Aminoacyl-tRNA biosynthesis; selenocysteinyl-tRNA(Sec) biosynthesis; selenocysteinyl-tRNA(Sec) from L-seryl-tRNA(Sec) (bacterial route): step 1/1.</text>
</comment>
<comment type="subcellular location">
    <subcellularLocation>
        <location evidence="1">Cytoplasm</location>
    </subcellularLocation>
</comment>
<comment type="similarity">
    <text evidence="1">Belongs to the SelA family.</text>
</comment>
<feature type="chain" id="PRO_0000189613" description="L-seryl-tRNA(Sec) selenium transferase">
    <location>
        <begin position="1"/>
        <end position="475"/>
    </location>
</feature>
<feature type="modified residue" description="N6-(pyridoxal phosphate)lysine" evidence="1">
    <location>
        <position position="297"/>
    </location>
</feature>
<gene>
    <name evidence="1" type="primary">selA</name>
    <name type="ordered locus">PP_0493</name>
</gene>